<dbReference type="EC" id="2.3.1.191" evidence="1"/>
<dbReference type="EMBL" id="CP001298">
    <property type="protein sequence ID" value="ACK83199.1"/>
    <property type="molecule type" value="Genomic_DNA"/>
</dbReference>
<dbReference type="RefSeq" id="WP_015950824.1">
    <property type="nucleotide sequence ID" value="NC_011757.1"/>
</dbReference>
<dbReference type="SMR" id="B7KZG7"/>
<dbReference type="KEGG" id="mch:Mchl_2354"/>
<dbReference type="HOGENOM" id="CLU_049865_0_2_5"/>
<dbReference type="UniPathway" id="UPA00973"/>
<dbReference type="Proteomes" id="UP000002385">
    <property type="component" value="Chromosome"/>
</dbReference>
<dbReference type="GO" id="GO:0016020">
    <property type="term" value="C:membrane"/>
    <property type="evidence" value="ECO:0007669"/>
    <property type="project" value="GOC"/>
</dbReference>
<dbReference type="GO" id="GO:0016410">
    <property type="term" value="F:N-acyltransferase activity"/>
    <property type="evidence" value="ECO:0007669"/>
    <property type="project" value="InterPro"/>
</dbReference>
<dbReference type="GO" id="GO:0009245">
    <property type="term" value="P:lipid A biosynthetic process"/>
    <property type="evidence" value="ECO:0007669"/>
    <property type="project" value="UniProtKB-UniRule"/>
</dbReference>
<dbReference type="CDD" id="cd03352">
    <property type="entry name" value="LbH_LpxD"/>
    <property type="match status" value="1"/>
</dbReference>
<dbReference type="Gene3D" id="2.160.10.10">
    <property type="entry name" value="Hexapeptide repeat proteins"/>
    <property type="match status" value="1"/>
</dbReference>
<dbReference type="Gene3D" id="3.40.1390.10">
    <property type="entry name" value="MurE/MurF, N-terminal domain"/>
    <property type="match status" value="1"/>
</dbReference>
<dbReference type="HAMAP" id="MF_00523">
    <property type="entry name" value="LpxD"/>
    <property type="match status" value="1"/>
</dbReference>
<dbReference type="InterPro" id="IPR001451">
    <property type="entry name" value="Hexapep"/>
</dbReference>
<dbReference type="InterPro" id="IPR018357">
    <property type="entry name" value="Hexapep_transf_CS"/>
</dbReference>
<dbReference type="InterPro" id="IPR007691">
    <property type="entry name" value="LpxD"/>
</dbReference>
<dbReference type="InterPro" id="IPR011004">
    <property type="entry name" value="Trimer_LpxA-like_sf"/>
</dbReference>
<dbReference type="InterPro" id="IPR020573">
    <property type="entry name" value="UDP_GlcNAc_AcTrfase_non-rep"/>
</dbReference>
<dbReference type="NCBIfam" id="TIGR01853">
    <property type="entry name" value="lipid_A_lpxD"/>
    <property type="match status" value="1"/>
</dbReference>
<dbReference type="NCBIfam" id="NF002060">
    <property type="entry name" value="PRK00892.1"/>
    <property type="match status" value="1"/>
</dbReference>
<dbReference type="PANTHER" id="PTHR43378">
    <property type="entry name" value="UDP-3-O-ACYLGLUCOSAMINE N-ACYLTRANSFERASE"/>
    <property type="match status" value="1"/>
</dbReference>
<dbReference type="PANTHER" id="PTHR43378:SF2">
    <property type="entry name" value="UDP-3-O-ACYLGLUCOSAMINE N-ACYLTRANSFERASE 1, MITOCHONDRIAL-RELATED"/>
    <property type="match status" value="1"/>
</dbReference>
<dbReference type="Pfam" id="PF00132">
    <property type="entry name" value="Hexapep"/>
    <property type="match status" value="2"/>
</dbReference>
<dbReference type="Pfam" id="PF04613">
    <property type="entry name" value="LpxD"/>
    <property type="match status" value="1"/>
</dbReference>
<dbReference type="SUPFAM" id="SSF51161">
    <property type="entry name" value="Trimeric LpxA-like enzymes"/>
    <property type="match status" value="1"/>
</dbReference>
<dbReference type="PROSITE" id="PS00101">
    <property type="entry name" value="HEXAPEP_TRANSFERASES"/>
    <property type="match status" value="2"/>
</dbReference>
<comment type="function">
    <text evidence="1">Catalyzes the N-acylation of UDP-3-O-acylglucosamine using 3-hydroxyacyl-ACP as the acyl donor. Is involved in the biosynthesis of lipid A, a phosphorylated glycolipid that anchors the lipopolysaccharide to the outer membrane of the cell.</text>
</comment>
<comment type="catalytic activity">
    <reaction evidence="1">
        <text>a UDP-3-O-[(3R)-3-hydroxyacyl]-alpha-D-glucosamine + a (3R)-hydroxyacyl-[ACP] = a UDP-2-N,3-O-bis[(3R)-3-hydroxyacyl]-alpha-D-glucosamine + holo-[ACP] + H(+)</text>
        <dbReference type="Rhea" id="RHEA:53836"/>
        <dbReference type="Rhea" id="RHEA-COMP:9685"/>
        <dbReference type="Rhea" id="RHEA-COMP:9945"/>
        <dbReference type="ChEBI" id="CHEBI:15378"/>
        <dbReference type="ChEBI" id="CHEBI:64479"/>
        <dbReference type="ChEBI" id="CHEBI:78827"/>
        <dbReference type="ChEBI" id="CHEBI:137740"/>
        <dbReference type="ChEBI" id="CHEBI:137748"/>
        <dbReference type="EC" id="2.3.1.191"/>
    </reaction>
</comment>
<comment type="pathway">
    <text evidence="1">Bacterial outer membrane biogenesis; LPS lipid A biosynthesis.</text>
</comment>
<comment type="subunit">
    <text evidence="1">Homotrimer.</text>
</comment>
<comment type="similarity">
    <text evidence="1">Belongs to the transferase hexapeptide repeat family. LpxD subfamily.</text>
</comment>
<feature type="chain" id="PRO_1000190895" description="UDP-3-O-acylglucosamine N-acyltransferase">
    <location>
        <begin position="1"/>
        <end position="351"/>
    </location>
</feature>
<feature type="active site" description="Proton acceptor" evidence="1">
    <location>
        <position position="257"/>
    </location>
</feature>
<organism>
    <name type="scientific">Methylorubrum extorquens (strain CM4 / NCIMB 13688)</name>
    <name type="common">Methylobacterium extorquens</name>
    <dbReference type="NCBI Taxonomy" id="440085"/>
    <lineage>
        <taxon>Bacteria</taxon>
        <taxon>Pseudomonadati</taxon>
        <taxon>Pseudomonadota</taxon>
        <taxon>Alphaproteobacteria</taxon>
        <taxon>Hyphomicrobiales</taxon>
        <taxon>Methylobacteriaceae</taxon>
        <taxon>Methylorubrum</taxon>
    </lineage>
</organism>
<protein>
    <recommendedName>
        <fullName evidence="1">UDP-3-O-acylglucosamine N-acyltransferase</fullName>
        <ecNumber evidence="1">2.3.1.191</ecNumber>
    </recommendedName>
</protein>
<reference key="1">
    <citation type="submission" date="2008-12" db="EMBL/GenBank/DDBJ databases">
        <title>Complete sequence of chromosome of Methylobacterium chloromethanicum CM4.</title>
        <authorList>
            <consortium name="US DOE Joint Genome Institute"/>
            <person name="Lucas S."/>
            <person name="Copeland A."/>
            <person name="Lapidus A."/>
            <person name="Glavina del Rio T."/>
            <person name="Dalin E."/>
            <person name="Tice H."/>
            <person name="Bruce D."/>
            <person name="Goodwin L."/>
            <person name="Pitluck S."/>
            <person name="Chertkov O."/>
            <person name="Brettin T."/>
            <person name="Detter J.C."/>
            <person name="Han C."/>
            <person name="Larimer F."/>
            <person name="Land M."/>
            <person name="Hauser L."/>
            <person name="Kyrpides N."/>
            <person name="Mikhailova N."/>
            <person name="Marx C."/>
            <person name="Richardson P."/>
        </authorList>
    </citation>
    <scope>NUCLEOTIDE SEQUENCE [LARGE SCALE GENOMIC DNA]</scope>
    <source>
        <strain>CM4 / NCIMB 13688</strain>
    </source>
</reference>
<name>LPXD_METC4</name>
<evidence type="ECO:0000255" key="1">
    <source>
        <dbReference type="HAMAP-Rule" id="MF_00523"/>
    </source>
</evidence>
<proteinExistence type="inferred from homology"/>
<accession>B7KZG7</accession>
<keyword id="KW-0012">Acyltransferase</keyword>
<keyword id="KW-0441">Lipid A biosynthesis</keyword>
<keyword id="KW-0444">Lipid biosynthesis</keyword>
<keyword id="KW-0443">Lipid metabolism</keyword>
<keyword id="KW-0677">Repeat</keyword>
<keyword id="KW-0808">Transferase</keyword>
<sequence>MSDPVFIAPKGGLTLGSVAEACGVPLPDGADPSQPVTGAAPLETAGPSELAYMDNARYGDALATTRALACLVSPRFAPRVPAGTIALVTRDPYRAYAGLLARLYEEAMRPGSLFAAAGVSPGAHVHPQARLEDGVRIDPGAVVGPGAEIGAGTVLGPNAVIGPNVRIGRDCSIGAGTTLTHALVGNRVIVHPGARIGQDGFGFAMGAGGHIKVPQVGRVIIQDDVEIGANTTIDRGASRDTVVGEGTKIDNLVQIAHNVVIGRHCVIVSGVGISGSTTLEDYVVLGGQVGVVGHLRIGMGSQIAGSSNVNRDVPPGSRWGGTPAKPVRTWFREMTTLARLAERSGKDEAEG</sequence>
<gene>
    <name evidence="1" type="primary">lpxD</name>
    <name type="ordered locus">Mchl_2354</name>
</gene>